<feature type="chain" id="PRO_1000116649" description="Holliday junction branch migration complex subunit RuvB">
    <location>
        <begin position="1"/>
        <end position="344"/>
    </location>
</feature>
<feature type="region of interest" description="Large ATPase domain (RuvB-L)" evidence="1">
    <location>
        <begin position="1"/>
        <end position="185"/>
    </location>
</feature>
<feature type="region of interest" description="Small ATPAse domain (RuvB-S)" evidence="1">
    <location>
        <begin position="186"/>
        <end position="256"/>
    </location>
</feature>
<feature type="region of interest" description="Head domain (RuvB-H)" evidence="1">
    <location>
        <begin position="259"/>
        <end position="344"/>
    </location>
</feature>
<feature type="binding site" evidence="1">
    <location>
        <position position="24"/>
    </location>
    <ligand>
        <name>ATP</name>
        <dbReference type="ChEBI" id="CHEBI:30616"/>
    </ligand>
</feature>
<feature type="binding site" evidence="1">
    <location>
        <position position="25"/>
    </location>
    <ligand>
        <name>ATP</name>
        <dbReference type="ChEBI" id="CHEBI:30616"/>
    </ligand>
</feature>
<feature type="binding site" evidence="1">
    <location>
        <position position="66"/>
    </location>
    <ligand>
        <name>ATP</name>
        <dbReference type="ChEBI" id="CHEBI:30616"/>
    </ligand>
</feature>
<feature type="binding site" evidence="1">
    <location>
        <position position="69"/>
    </location>
    <ligand>
        <name>ATP</name>
        <dbReference type="ChEBI" id="CHEBI:30616"/>
    </ligand>
</feature>
<feature type="binding site" evidence="1">
    <location>
        <position position="70"/>
    </location>
    <ligand>
        <name>ATP</name>
        <dbReference type="ChEBI" id="CHEBI:30616"/>
    </ligand>
</feature>
<feature type="binding site" evidence="1">
    <location>
        <position position="70"/>
    </location>
    <ligand>
        <name>Mg(2+)</name>
        <dbReference type="ChEBI" id="CHEBI:18420"/>
    </ligand>
</feature>
<feature type="binding site" evidence="1">
    <location>
        <position position="71"/>
    </location>
    <ligand>
        <name>ATP</name>
        <dbReference type="ChEBI" id="CHEBI:30616"/>
    </ligand>
</feature>
<feature type="binding site" evidence="1">
    <location>
        <begin position="132"/>
        <end position="134"/>
    </location>
    <ligand>
        <name>ATP</name>
        <dbReference type="ChEBI" id="CHEBI:30616"/>
    </ligand>
</feature>
<feature type="binding site" evidence="1">
    <location>
        <position position="175"/>
    </location>
    <ligand>
        <name>ATP</name>
        <dbReference type="ChEBI" id="CHEBI:30616"/>
    </ligand>
</feature>
<feature type="binding site" evidence="1">
    <location>
        <position position="185"/>
    </location>
    <ligand>
        <name>ATP</name>
        <dbReference type="ChEBI" id="CHEBI:30616"/>
    </ligand>
</feature>
<feature type="binding site" evidence="1">
    <location>
        <position position="222"/>
    </location>
    <ligand>
        <name>ATP</name>
        <dbReference type="ChEBI" id="CHEBI:30616"/>
    </ligand>
</feature>
<feature type="binding site" evidence="1">
    <location>
        <position position="314"/>
    </location>
    <ligand>
        <name>DNA</name>
        <dbReference type="ChEBI" id="CHEBI:16991"/>
    </ligand>
</feature>
<feature type="binding site" evidence="1">
    <location>
        <position position="319"/>
    </location>
    <ligand>
        <name>DNA</name>
        <dbReference type="ChEBI" id="CHEBI:16991"/>
    </ligand>
</feature>
<accession>C1AF61</accession>
<name>RUVB_MYCBT</name>
<keyword id="KW-0067">ATP-binding</keyword>
<keyword id="KW-0963">Cytoplasm</keyword>
<keyword id="KW-0227">DNA damage</keyword>
<keyword id="KW-0233">DNA recombination</keyword>
<keyword id="KW-0234">DNA repair</keyword>
<keyword id="KW-0238">DNA-binding</keyword>
<keyword id="KW-0378">Hydrolase</keyword>
<keyword id="KW-0547">Nucleotide-binding</keyword>
<protein>
    <recommendedName>
        <fullName evidence="1">Holliday junction branch migration complex subunit RuvB</fullName>
        <ecNumber evidence="1">3.6.4.-</ecNumber>
    </recommendedName>
</protein>
<proteinExistence type="inferred from homology"/>
<organism>
    <name type="scientific">Mycobacterium bovis (strain BCG / Tokyo 172 / ATCC 35737 / TMC 1019)</name>
    <dbReference type="NCBI Taxonomy" id="561275"/>
    <lineage>
        <taxon>Bacteria</taxon>
        <taxon>Bacillati</taxon>
        <taxon>Actinomycetota</taxon>
        <taxon>Actinomycetes</taxon>
        <taxon>Mycobacteriales</taxon>
        <taxon>Mycobacteriaceae</taxon>
        <taxon>Mycobacterium</taxon>
        <taxon>Mycobacterium tuberculosis complex</taxon>
    </lineage>
</organism>
<reference key="1">
    <citation type="journal article" date="2009" name="Vaccine">
        <title>Whole genome sequence analysis of Mycobacterium bovis bacillus Calmette-Guerin (BCG) Tokyo 172: a comparative study of BCG vaccine substrains.</title>
        <authorList>
            <person name="Seki M."/>
            <person name="Honda I."/>
            <person name="Fujita I."/>
            <person name="Yano I."/>
            <person name="Yamamoto S."/>
            <person name="Koyama A."/>
        </authorList>
    </citation>
    <scope>NUCLEOTIDE SEQUENCE [LARGE SCALE GENOMIC DNA]</scope>
    <source>
        <strain>BCG / Tokyo 172 / ATCC 35737 / TMC 1019</strain>
    </source>
</reference>
<dbReference type="EC" id="3.6.4.-" evidence="1"/>
<dbReference type="EMBL" id="AP010918">
    <property type="protein sequence ID" value="BAH26890.1"/>
    <property type="molecule type" value="Genomic_DNA"/>
</dbReference>
<dbReference type="RefSeq" id="WP_003413416.1">
    <property type="nucleotide sequence ID" value="NZ_CP014566.1"/>
</dbReference>
<dbReference type="SMR" id="C1AF61"/>
<dbReference type="GeneID" id="45426594"/>
<dbReference type="KEGG" id="mbt:JTY_2609"/>
<dbReference type="HOGENOM" id="CLU_055599_1_0_11"/>
<dbReference type="GO" id="GO:0005737">
    <property type="term" value="C:cytoplasm"/>
    <property type="evidence" value="ECO:0007669"/>
    <property type="project" value="UniProtKB-SubCell"/>
</dbReference>
<dbReference type="GO" id="GO:0048476">
    <property type="term" value="C:Holliday junction resolvase complex"/>
    <property type="evidence" value="ECO:0007669"/>
    <property type="project" value="UniProtKB-UniRule"/>
</dbReference>
<dbReference type="GO" id="GO:0005524">
    <property type="term" value="F:ATP binding"/>
    <property type="evidence" value="ECO:0007669"/>
    <property type="project" value="UniProtKB-UniRule"/>
</dbReference>
<dbReference type="GO" id="GO:0016887">
    <property type="term" value="F:ATP hydrolysis activity"/>
    <property type="evidence" value="ECO:0007669"/>
    <property type="project" value="InterPro"/>
</dbReference>
<dbReference type="GO" id="GO:0000400">
    <property type="term" value="F:four-way junction DNA binding"/>
    <property type="evidence" value="ECO:0007669"/>
    <property type="project" value="UniProtKB-UniRule"/>
</dbReference>
<dbReference type="GO" id="GO:0009378">
    <property type="term" value="F:four-way junction helicase activity"/>
    <property type="evidence" value="ECO:0007669"/>
    <property type="project" value="InterPro"/>
</dbReference>
<dbReference type="GO" id="GO:0006310">
    <property type="term" value="P:DNA recombination"/>
    <property type="evidence" value="ECO:0007669"/>
    <property type="project" value="UniProtKB-UniRule"/>
</dbReference>
<dbReference type="GO" id="GO:0006281">
    <property type="term" value="P:DNA repair"/>
    <property type="evidence" value="ECO:0007669"/>
    <property type="project" value="UniProtKB-UniRule"/>
</dbReference>
<dbReference type="CDD" id="cd00009">
    <property type="entry name" value="AAA"/>
    <property type="match status" value="1"/>
</dbReference>
<dbReference type="Gene3D" id="1.10.8.60">
    <property type="match status" value="1"/>
</dbReference>
<dbReference type="Gene3D" id="3.40.50.300">
    <property type="entry name" value="P-loop containing nucleotide triphosphate hydrolases"/>
    <property type="match status" value="1"/>
</dbReference>
<dbReference type="Gene3D" id="1.10.10.10">
    <property type="entry name" value="Winged helix-like DNA-binding domain superfamily/Winged helix DNA-binding domain"/>
    <property type="match status" value="1"/>
</dbReference>
<dbReference type="HAMAP" id="MF_00016">
    <property type="entry name" value="DNA_HJ_migration_RuvB"/>
    <property type="match status" value="1"/>
</dbReference>
<dbReference type="InterPro" id="IPR003593">
    <property type="entry name" value="AAA+_ATPase"/>
</dbReference>
<dbReference type="InterPro" id="IPR041445">
    <property type="entry name" value="AAA_lid_4"/>
</dbReference>
<dbReference type="InterPro" id="IPR004605">
    <property type="entry name" value="DNA_helicase_Holl-junc_RuvB"/>
</dbReference>
<dbReference type="InterPro" id="IPR027417">
    <property type="entry name" value="P-loop_NTPase"/>
</dbReference>
<dbReference type="InterPro" id="IPR008824">
    <property type="entry name" value="RuvB-like_N"/>
</dbReference>
<dbReference type="InterPro" id="IPR008823">
    <property type="entry name" value="RuvB_C"/>
</dbReference>
<dbReference type="InterPro" id="IPR036388">
    <property type="entry name" value="WH-like_DNA-bd_sf"/>
</dbReference>
<dbReference type="InterPro" id="IPR036390">
    <property type="entry name" value="WH_DNA-bd_sf"/>
</dbReference>
<dbReference type="NCBIfam" id="NF000868">
    <property type="entry name" value="PRK00080.1"/>
    <property type="match status" value="1"/>
</dbReference>
<dbReference type="NCBIfam" id="TIGR00635">
    <property type="entry name" value="ruvB"/>
    <property type="match status" value="1"/>
</dbReference>
<dbReference type="PANTHER" id="PTHR42848">
    <property type="match status" value="1"/>
</dbReference>
<dbReference type="PANTHER" id="PTHR42848:SF1">
    <property type="entry name" value="HOLLIDAY JUNCTION BRANCH MIGRATION COMPLEX SUBUNIT RUVB"/>
    <property type="match status" value="1"/>
</dbReference>
<dbReference type="Pfam" id="PF17864">
    <property type="entry name" value="AAA_lid_4"/>
    <property type="match status" value="1"/>
</dbReference>
<dbReference type="Pfam" id="PF05491">
    <property type="entry name" value="RuvB_C"/>
    <property type="match status" value="1"/>
</dbReference>
<dbReference type="Pfam" id="PF05496">
    <property type="entry name" value="RuvB_N"/>
    <property type="match status" value="1"/>
</dbReference>
<dbReference type="PRINTS" id="PR00830">
    <property type="entry name" value="ENDOLAPTASE"/>
</dbReference>
<dbReference type="SMART" id="SM00382">
    <property type="entry name" value="AAA"/>
    <property type="match status" value="1"/>
</dbReference>
<dbReference type="SUPFAM" id="SSF52540">
    <property type="entry name" value="P-loop containing nucleoside triphosphate hydrolases"/>
    <property type="match status" value="1"/>
</dbReference>
<dbReference type="SUPFAM" id="SSF46785">
    <property type="entry name" value="Winged helix' DNA-binding domain"/>
    <property type="match status" value="1"/>
</dbReference>
<gene>
    <name evidence="1" type="primary">ruvB</name>
    <name type="ordered locus">JTY_2609</name>
</gene>
<sequence>MTERSDRDVSPALTVGEGDIDVSLRPRSLREFIGQPRVREQLQLVIEGAKNRGGTPDHILLSGPPGLGKTSLAMIIAAELGSSLRVTSGPALERAGDLAAMLSNLVEHDVLFIDEIHRIARPAEEMLYLAMEDFRVDVVVGKGPGATSIPLEVAPFTLVGATTRSGALTGPLRDRFGFTAHMDFYEPAELERVLARSAGILGIELGADAGAEIARRSRGTPRIANRLLRRVRDFAEVRADGVITRDVAKAALEVYDVDELGLDRLDRAVLSALTRSFGGGPVGVSTLAVAVGEEAATVEEVCEPFLVRAGMVARTPRGRVATALAWTHLGMTPPVGASQPGLFE</sequence>
<comment type="function">
    <text evidence="1">The RuvA-RuvB-RuvC complex processes Holliday junction (HJ) DNA during genetic recombination and DNA repair, while the RuvA-RuvB complex plays an important role in the rescue of blocked DNA replication forks via replication fork reversal (RFR). RuvA specifically binds to HJ cruciform DNA, conferring on it an open structure. The RuvB hexamer acts as an ATP-dependent pump, pulling dsDNA into and through the RuvAB complex. RuvB forms 2 homohexamers on either side of HJ DNA bound by 1 or 2 RuvA tetramers; 4 subunits per hexamer contact DNA at a time. Coordinated motions by a converter formed by DNA-disengaged RuvB subunits stimulates ATP hydrolysis and nucleotide exchange. Immobilization of the converter enables RuvB to convert the ATP-contained energy into a lever motion, pulling 2 nucleotides of DNA out of the RuvA tetramer per ATP hydrolyzed, thus driving DNA branch migration. The RuvB motors rotate together with the DNA substrate, which together with the progressing nucleotide cycle form the mechanistic basis for DNA recombination by continuous HJ branch migration. Branch migration allows RuvC to scan DNA until it finds its consensus sequence, where it cleaves and resolves cruciform DNA.</text>
</comment>
<comment type="catalytic activity">
    <reaction evidence="1">
        <text>ATP + H2O = ADP + phosphate + H(+)</text>
        <dbReference type="Rhea" id="RHEA:13065"/>
        <dbReference type="ChEBI" id="CHEBI:15377"/>
        <dbReference type="ChEBI" id="CHEBI:15378"/>
        <dbReference type="ChEBI" id="CHEBI:30616"/>
        <dbReference type="ChEBI" id="CHEBI:43474"/>
        <dbReference type="ChEBI" id="CHEBI:456216"/>
    </reaction>
</comment>
<comment type="subunit">
    <text evidence="1">Homohexamer. Forms an RuvA(8)-RuvB(12)-Holliday junction (HJ) complex. HJ DNA is sandwiched between 2 RuvA tetramers; dsDNA enters through RuvA and exits via RuvB. An RuvB hexamer assembles on each DNA strand where it exits the tetramer. Each RuvB hexamer is contacted by two RuvA subunits (via domain III) on 2 adjacent RuvB subunits; this complex drives branch migration. In the full resolvosome a probable DNA-RuvA(4)-RuvB(12)-RuvC(2) complex forms which resolves the HJ.</text>
</comment>
<comment type="subcellular location">
    <subcellularLocation>
        <location evidence="1">Cytoplasm</location>
    </subcellularLocation>
</comment>
<comment type="domain">
    <text evidence="1">Has 3 domains, the large (RuvB-L) and small ATPase (RuvB-S) domains and the C-terminal head (RuvB-H) domain. The head domain binds DNA, while the ATPase domains jointly bind ATP, ADP or are empty depending on the state of the subunit in the translocation cycle. During a single DNA translocation step the structure of each domain remains the same, but their relative positions change.</text>
</comment>
<comment type="similarity">
    <text evidence="1">Belongs to the RuvB family.</text>
</comment>
<evidence type="ECO:0000255" key="1">
    <source>
        <dbReference type="HAMAP-Rule" id="MF_00016"/>
    </source>
</evidence>